<accession>P42445</accession>
<sequence length="347" mass="37686">MAIDEDKQKAISLAIKQIDKVFGKGALVRLGDKQVEKIDSISTGSLGLDLALGIGGVPKGRIIEIYGPESSGKTTLSLHIIAECQKNGGVCAFIDAEHALDVHYAKRLGVDTENLLVSQPDTGEQALEILETITRSGGIDLVVVDSVAALTPKAEIDGDMGDQHVGLQARLMSHALRKITGVLHKMNTTLIFINQIRMKIGMMGYGSPETTTGGNALKFYASVRIDIRRIASLKQNEQHIGNRAKAKVVKNKVAPPFREAEFDIMFGEGISKEGEIIDYGVKLDIVDKSGAWLSYQDKKLGQGRENAKALLKEDKALADEITLKIKESIGSNEEIMPLPDEPLEEME</sequence>
<evidence type="ECO:0000255" key="1">
    <source>
        <dbReference type="HAMAP-Rule" id="MF_00268"/>
    </source>
</evidence>
<gene>
    <name evidence="1" type="primary">recA</name>
    <name type="ordered locus">HP_0153</name>
</gene>
<comment type="function">
    <text>Can catalyze the hydrolysis of ATP in the presence of single-stranded DNA, the ATP-dependent uptake of single-stranded DNA by duplex DNA, and the ATP-dependent hybridization of homologous single-stranded DNAs. It interacts with LexA causing its activation and leading to its autocatalytic cleavage.</text>
</comment>
<comment type="function">
    <text>Deletion of this gene leads to the inability of the bacteria to perform homologous recombination, and markedly increases UV sensitivity.</text>
</comment>
<comment type="subcellular location">
    <subcellularLocation>
        <location evidence="1">Cytoplasm</location>
    </subcellularLocation>
</comment>
<comment type="PTM">
    <text>The protein migrates as a 40 kDa protein in strains 69A and NCTC 11637. When overexpressed in E.coli a 38 kDa protein is made which is unable to complement the E.coli deletion mutant. It has been suggested this size difference is due to a post-translational modification.</text>
</comment>
<comment type="similarity">
    <text evidence="1">Belongs to the RecA family.</text>
</comment>
<protein>
    <recommendedName>
        <fullName evidence="1">Protein RecA</fullName>
    </recommendedName>
    <alternativeName>
        <fullName evidence="1">Recombinase A</fullName>
    </alternativeName>
</protein>
<keyword id="KW-0067">ATP-binding</keyword>
<keyword id="KW-0963">Cytoplasm</keyword>
<keyword id="KW-0227">DNA damage</keyword>
<keyword id="KW-0233">DNA recombination</keyword>
<keyword id="KW-0234">DNA repair</keyword>
<keyword id="KW-0238">DNA-binding</keyword>
<keyword id="KW-0547">Nucleotide-binding</keyword>
<keyword id="KW-1185">Reference proteome</keyword>
<keyword id="KW-0742">SOS response</keyword>
<name>RECA_HELPY</name>
<proteinExistence type="evidence at protein level"/>
<organism>
    <name type="scientific">Helicobacter pylori (strain ATCC 700392 / 26695)</name>
    <name type="common">Campylobacter pylori</name>
    <dbReference type="NCBI Taxonomy" id="85962"/>
    <lineage>
        <taxon>Bacteria</taxon>
        <taxon>Pseudomonadati</taxon>
        <taxon>Campylobacterota</taxon>
        <taxon>Epsilonproteobacteria</taxon>
        <taxon>Campylobacterales</taxon>
        <taxon>Helicobacteraceae</taxon>
        <taxon>Helicobacter</taxon>
    </lineage>
</organism>
<reference key="1">
    <citation type="journal article" date="1995" name="Infect. Immun.">
        <title>Isolation of the Helicobacter pylori recA gene and involvement of the recA region in resistance to low pH.</title>
        <authorList>
            <person name="Thompson S.A."/>
            <person name="Blaser M.J."/>
        </authorList>
    </citation>
    <scope>NUCLEOTIDE SEQUENCE [GENOMIC DNA]</scope>
    <source>
        <strain>ATCC 53726 / 84-183</strain>
    </source>
</reference>
<reference key="2">
    <citation type="journal article" date="1995" name="Mol. Gen. Genet.">
        <title>Cloning of the Helicobacter pylori recA gene and functional characterization of its product.</title>
        <authorList>
            <person name="Schmitt W."/>
            <person name="Odenbreit S."/>
            <person name="Heuermann D."/>
            <person name="Haas R."/>
        </authorList>
    </citation>
    <scope>NUCLEOTIDE SEQUENCE [GENOMIC DNA]</scope>
    <scope>CHARACTERIZATION</scope>
    <scope>SUGGESTION OF A POST-TRANSLATIONAL MODIFICATION</scope>
    <source>
        <strain>69A</strain>
        <strain>ATCC 43504 / NCTC 11637 / JCM 7653 / RPH 13487</strain>
    </source>
</reference>
<reference key="3">
    <citation type="journal article" date="1997" name="Nature">
        <title>The complete genome sequence of the gastric pathogen Helicobacter pylori.</title>
        <authorList>
            <person name="Tomb J.-F."/>
            <person name="White O."/>
            <person name="Kerlavage A.R."/>
            <person name="Clayton R.A."/>
            <person name="Sutton G.G."/>
            <person name="Fleischmann R.D."/>
            <person name="Ketchum K.A."/>
            <person name="Klenk H.-P."/>
            <person name="Gill S.R."/>
            <person name="Dougherty B.A."/>
            <person name="Nelson K.E."/>
            <person name="Quackenbush J."/>
            <person name="Zhou L."/>
            <person name="Kirkness E.F."/>
            <person name="Peterson S.N."/>
            <person name="Loftus B.J."/>
            <person name="Richardson D.L."/>
            <person name="Dodson R.J."/>
            <person name="Khalak H.G."/>
            <person name="Glodek A."/>
            <person name="McKenney K."/>
            <person name="FitzGerald L.M."/>
            <person name="Lee N."/>
            <person name="Adams M.D."/>
            <person name="Hickey E.K."/>
            <person name="Berg D.E."/>
            <person name="Gocayne J.D."/>
            <person name="Utterback T.R."/>
            <person name="Peterson J.D."/>
            <person name="Kelley J.M."/>
            <person name="Cotton M.D."/>
            <person name="Weidman J.F."/>
            <person name="Fujii C."/>
            <person name="Bowman C."/>
            <person name="Watthey L."/>
            <person name="Wallin E."/>
            <person name="Hayes W.S."/>
            <person name="Borodovsky M."/>
            <person name="Karp P.D."/>
            <person name="Smith H.O."/>
            <person name="Fraser C.M."/>
            <person name="Venter J.C."/>
        </authorList>
    </citation>
    <scope>NUCLEOTIDE SEQUENCE [LARGE SCALE GENOMIC DNA]</scope>
    <source>
        <strain>ATCC 700392 / 26695</strain>
    </source>
</reference>
<dbReference type="EMBL" id="Z35478">
    <property type="protein sequence ID" value="CAA84615.1"/>
    <property type="molecule type" value="Genomic_DNA"/>
</dbReference>
<dbReference type="EMBL" id="U13756">
    <property type="protein sequence ID" value="AAC43379.1"/>
    <property type="molecule type" value="Genomic_DNA"/>
</dbReference>
<dbReference type="EMBL" id="AE000511">
    <property type="protein sequence ID" value="AAD07218.1"/>
    <property type="molecule type" value="Genomic_DNA"/>
</dbReference>
<dbReference type="PIR" id="S58683">
    <property type="entry name" value="S58683"/>
</dbReference>
<dbReference type="RefSeq" id="NP_206952.1">
    <property type="nucleotide sequence ID" value="NC_000915.1"/>
</dbReference>
<dbReference type="RefSeq" id="WP_000963128.1">
    <property type="nucleotide sequence ID" value="NC_018939.1"/>
</dbReference>
<dbReference type="SMR" id="P42445"/>
<dbReference type="FunCoup" id="P42445">
    <property type="interactions" value="358"/>
</dbReference>
<dbReference type="STRING" id="85962.HP_0153"/>
<dbReference type="PaxDb" id="85962-C694_00765"/>
<dbReference type="EnsemblBacteria" id="AAD07218">
    <property type="protein sequence ID" value="AAD07218"/>
    <property type="gene ID" value="HP_0153"/>
</dbReference>
<dbReference type="KEGG" id="heo:C694_00765"/>
<dbReference type="KEGG" id="hpy:HP_0153"/>
<dbReference type="PATRIC" id="fig|85962.47.peg.166"/>
<dbReference type="eggNOG" id="COG0468">
    <property type="taxonomic scope" value="Bacteria"/>
</dbReference>
<dbReference type="InParanoid" id="P42445"/>
<dbReference type="OrthoDB" id="9776733at2"/>
<dbReference type="PhylomeDB" id="P42445"/>
<dbReference type="Proteomes" id="UP000000429">
    <property type="component" value="Chromosome"/>
</dbReference>
<dbReference type="GO" id="GO:0005737">
    <property type="term" value="C:cytoplasm"/>
    <property type="evidence" value="ECO:0007669"/>
    <property type="project" value="UniProtKB-SubCell"/>
</dbReference>
<dbReference type="GO" id="GO:0005524">
    <property type="term" value="F:ATP binding"/>
    <property type="evidence" value="ECO:0007669"/>
    <property type="project" value="UniProtKB-UniRule"/>
</dbReference>
<dbReference type="GO" id="GO:0016887">
    <property type="term" value="F:ATP hydrolysis activity"/>
    <property type="evidence" value="ECO:0007669"/>
    <property type="project" value="InterPro"/>
</dbReference>
<dbReference type="GO" id="GO:0140664">
    <property type="term" value="F:ATP-dependent DNA damage sensor activity"/>
    <property type="evidence" value="ECO:0007669"/>
    <property type="project" value="InterPro"/>
</dbReference>
<dbReference type="GO" id="GO:0003684">
    <property type="term" value="F:damaged DNA binding"/>
    <property type="evidence" value="ECO:0007669"/>
    <property type="project" value="UniProtKB-UniRule"/>
</dbReference>
<dbReference type="GO" id="GO:0003697">
    <property type="term" value="F:single-stranded DNA binding"/>
    <property type="evidence" value="ECO:0007669"/>
    <property type="project" value="UniProtKB-UniRule"/>
</dbReference>
<dbReference type="GO" id="GO:0006310">
    <property type="term" value="P:DNA recombination"/>
    <property type="evidence" value="ECO:0007669"/>
    <property type="project" value="UniProtKB-UniRule"/>
</dbReference>
<dbReference type="GO" id="GO:0006281">
    <property type="term" value="P:DNA repair"/>
    <property type="evidence" value="ECO:0000315"/>
    <property type="project" value="CACAO"/>
</dbReference>
<dbReference type="GO" id="GO:0009432">
    <property type="term" value="P:SOS response"/>
    <property type="evidence" value="ECO:0007669"/>
    <property type="project" value="UniProtKB-UniRule"/>
</dbReference>
<dbReference type="CDD" id="cd00983">
    <property type="entry name" value="RecA"/>
    <property type="match status" value="1"/>
</dbReference>
<dbReference type="FunFam" id="3.40.50.300:FF:000087">
    <property type="entry name" value="Recombinase RecA"/>
    <property type="match status" value="1"/>
</dbReference>
<dbReference type="Gene3D" id="3.40.50.300">
    <property type="entry name" value="P-loop containing nucleotide triphosphate hydrolases"/>
    <property type="match status" value="1"/>
</dbReference>
<dbReference type="HAMAP" id="MF_00268">
    <property type="entry name" value="RecA"/>
    <property type="match status" value="1"/>
</dbReference>
<dbReference type="InterPro" id="IPR003593">
    <property type="entry name" value="AAA+_ATPase"/>
</dbReference>
<dbReference type="InterPro" id="IPR013765">
    <property type="entry name" value="DNA_recomb/repair_RecA"/>
</dbReference>
<dbReference type="InterPro" id="IPR020584">
    <property type="entry name" value="DNA_recomb/repair_RecA_CS"/>
</dbReference>
<dbReference type="InterPro" id="IPR027417">
    <property type="entry name" value="P-loop_NTPase"/>
</dbReference>
<dbReference type="InterPro" id="IPR049261">
    <property type="entry name" value="RecA-like_C"/>
</dbReference>
<dbReference type="InterPro" id="IPR049428">
    <property type="entry name" value="RecA-like_N"/>
</dbReference>
<dbReference type="InterPro" id="IPR020588">
    <property type="entry name" value="RecA_ATP-bd"/>
</dbReference>
<dbReference type="InterPro" id="IPR023400">
    <property type="entry name" value="RecA_C_sf"/>
</dbReference>
<dbReference type="InterPro" id="IPR020587">
    <property type="entry name" value="RecA_monomer-monomer_interface"/>
</dbReference>
<dbReference type="NCBIfam" id="TIGR02012">
    <property type="entry name" value="tigrfam_recA"/>
    <property type="match status" value="1"/>
</dbReference>
<dbReference type="PANTHER" id="PTHR45900:SF1">
    <property type="entry name" value="MITOCHONDRIAL DNA REPAIR PROTEIN RECA HOMOLOG-RELATED"/>
    <property type="match status" value="1"/>
</dbReference>
<dbReference type="PANTHER" id="PTHR45900">
    <property type="entry name" value="RECA"/>
    <property type="match status" value="1"/>
</dbReference>
<dbReference type="Pfam" id="PF00154">
    <property type="entry name" value="RecA"/>
    <property type="match status" value="1"/>
</dbReference>
<dbReference type="Pfam" id="PF21096">
    <property type="entry name" value="RecA_C"/>
    <property type="match status" value="1"/>
</dbReference>
<dbReference type="PRINTS" id="PR00142">
    <property type="entry name" value="RECA"/>
</dbReference>
<dbReference type="SMART" id="SM00382">
    <property type="entry name" value="AAA"/>
    <property type="match status" value="1"/>
</dbReference>
<dbReference type="SUPFAM" id="SSF52540">
    <property type="entry name" value="P-loop containing nucleoside triphosphate hydrolases"/>
    <property type="match status" value="1"/>
</dbReference>
<dbReference type="SUPFAM" id="SSF54752">
    <property type="entry name" value="RecA protein, C-terminal domain"/>
    <property type="match status" value="1"/>
</dbReference>
<dbReference type="PROSITE" id="PS00321">
    <property type="entry name" value="RECA_1"/>
    <property type="match status" value="1"/>
</dbReference>
<dbReference type="PROSITE" id="PS50162">
    <property type="entry name" value="RECA_2"/>
    <property type="match status" value="1"/>
</dbReference>
<dbReference type="PROSITE" id="PS50163">
    <property type="entry name" value="RECA_3"/>
    <property type="match status" value="1"/>
</dbReference>
<feature type="chain" id="PRO_0000122725" description="Protein RecA">
    <location>
        <begin position="1"/>
        <end position="347"/>
    </location>
</feature>
<feature type="binding site" evidence="1">
    <location>
        <begin position="67"/>
        <end position="74"/>
    </location>
    <ligand>
        <name>ATP</name>
        <dbReference type="ChEBI" id="CHEBI:30616"/>
    </ligand>
</feature>
<feature type="sequence variant" description="In strain: 69A and ATCC 53726.">
    <original>S</original>
    <variation>A</variation>
    <location>
        <position position="40"/>
    </location>
</feature>
<feature type="sequence variant" description="In strain: ATCC 53726.">
    <original>H</original>
    <variation>Y</variation>
    <location>
        <position position="103"/>
    </location>
</feature>
<feature type="sequence variant" description="In strain: 69A.">
    <original>E</original>
    <variation>Q</variation>
    <location>
        <position position="113"/>
    </location>
</feature>
<feature type="sequence variant" description="In strain: ATCC 53726.">
    <original>D</original>
    <variation>S</variation>
    <location>
        <position position="121"/>
    </location>
</feature>
<feature type="sequence variant" description="In strain: ATCC 53726.">
    <original>Q</original>
    <variation>E</variation>
    <location>
        <position position="125"/>
    </location>
</feature>
<feature type="sequence variant" description="In strain: ATCC 53726.">
    <original>M</original>
    <variation>T</variation>
    <location>
        <position position="203"/>
    </location>
</feature>
<feature type="sequence variant" description="In strain: 69A.">
    <original>S</original>
    <variation>T</variation>
    <location>
        <position position="232"/>
    </location>
</feature>
<feature type="sequence variant" description="In strain: ATCC 53726.">
    <original>D</original>
    <variation>N</variation>
    <location>
        <position position="319"/>
    </location>
</feature>